<reference key="1">
    <citation type="journal article" date="1992" name="J. Exp. Med.">
        <title>A major T cell antigen of Mycobacterium leprae is a 10-kD heat-shock cognate protein.</title>
        <authorList>
            <person name="Mehra V.L."/>
            <person name="Bloom B.R."/>
            <person name="Bajardi A.C."/>
            <person name="Grisso A.C."/>
            <person name="Sieling P.A."/>
            <person name="Alland D."/>
            <person name="Convit J."/>
            <person name="Fan X."/>
            <person name="Hunter S.W."/>
            <person name="Brennan P.J."/>
            <person name="Rea T.H."/>
            <person name="Modlin R.L."/>
        </authorList>
    </citation>
    <scope>NUCLEOTIDE SEQUENCE [GENOMIC DNA]</scope>
    <scope>PROTEIN SEQUENCE OF 2-25</scope>
</reference>
<reference key="2">
    <citation type="journal article" date="1992" name="Mol. Microbiol.">
        <title>Mycobacteria contain two groEL genes: the second Mycobacterium leprae groEL gene is arranged in an operon with groES.</title>
        <authorList>
            <person name="de Wit T.F.R."/>
            <person name="Bekelie S."/>
            <person name="Osland A."/>
            <person name="Miko T.L."/>
            <person name="Hermans P.W.M."/>
            <person name="van Soolingen D."/>
            <person name="Drijfhout J."/>
            <person name="Schoeningh R."/>
            <person name="Janson A.A.M."/>
            <person name="Thole J.E.R."/>
        </authorList>
    </citation>
    <scope>NUCLEOTIDE SEQUENCE [GENOMIC DNA]</scope>
</reference>
<reference key="3">
    <citation type="submission" date="1994-03" db="EMBL/GenBank/DDBJ databases">
        <authorList>
            <person name="Smith D.R."/>
            <person name="Robison K."/>
        </authorList>
    </citation>
    <scope>NUCLEOTIDE SEQUENCE [GENOMIC DNA]</scope>
</reference>
<reference key="4">
    <citation type="journal article" date="2001" name="Nature">
        <title>Massive gene decay in the leprosy bacillus.</title>
        <authorList>
            <person name="Cole S.T."/>
            <person name="Eiglmeier K."/>
            <person name="Parkhill J."/>
            <person name="James K.D."/>
            <person name="Thomson N.R."/>
            <person name="Wheeler P.R."/>
            <person name="Honore N."/>
            <person name="Garnier T."/>
            <person name="Churcher C.M."/>
            <person name="Harris D.E."/>
            <person name="Mungall K.L."/>
            <person name="Basham D."/>
            <person name="Brown D."/>
            <person name="Chillingworth T."/>
            <person name="Connor R."/>
            <person name="Davies R.M."/>
            <person name="Devlin K."/>
            <person name="Duthoy S."/>
            <person name="Feltwell T."/>
            <person name="Fraser A."/>
            <person name="Hamlin N."/>
            <person name="Holroyd S."/>
            <person name="Hornsby T."/>
            <person name="Jagels K."/>
            <person name="Lacroix C."/>
            <person name="Maclean J."/>
            <person name="Moule S."/>
            <person name="Murphy L.D."/>
            <person name="Oliver K."/>
            <person name="Quail M.A."/>
            <person name="Rajandream M.A."/>
            <person name="Rutherford K.M."/>
            <person name="Rutter S."/>
            <person name="Seeger K."/>
            <person name="Simon S."/>
            <person name="Simmonds M."/>
            <person name="Skelton J."/>
            <person name="Squares R."/>
            <person name="Squares S."/>
            <person name="Stevens K."/>
            <person name="Taylor K."/>
            <person name="Whitehead S."/>
            <person name="Woodward J.R."/>
            <person name="Barrell B.G."/>
        </authorList>
    </citation>
    <scope>NUCLEOTIDE SEQUENCE [LARGE SCALE GENOMIC DNA]</scope>
    <source>
        <strain>TN</strain>
    </source>
</reference>
<reference key="5">
    <citation type="journal article" date="1996" name="Science">
        <title>Structure of the heat shock protein chaperonin-10 of Mycobacterium leprae.</title>
        <authorList>
            <person name="Mande S.C."/>
            <person name="Mehra V."/>
            <person name="Bloom B.R."/>
            <person name="Hol W.G.J."/>
        </authorList>
    </citation>
    <scope>X-RAY CRYSTALLOGRAPHY (3.5 ANGSTROMS)</scope>
</reference>
<reference key="6">
    <citation type="journal article" date="1996" name="Science">
        <authorList>
            <person name="Mande S.C."/>
            <person name="Mehra V."/>
            <person name="Bloom B.R."/>
            <person name="Hol W.G.J."/>
        </authorList>
    </citation>
    <scope>ERRATUM OF PUBMED:8539620</scope>
</reference>
<evidence type="ECO:0000255" key="1">
    <source>
        <dbReference type="HAMAP-Rule" id="MF_00580"/>
    </source>
</evidence>
<evidence type="ECO:0000269" key="2">
    <source>
    </source>
</evidence>
<evidence type="ECO:0000305" key="3"/>
<sequence length="100" mass="10800">MAKVKIKPLEDKILVQAGEAETMTPSGLVIPENAKEKPQEGTVVAVGPGRWDEDGAKRIPVDVSEGDIVIYSKYGGTEIKYNGEEYLILSARDVLAVVSK</sequence>
<protein>
    <recommendedName>
        <fullName evidence="1">Co-chaperonin GroES</fullName>
    </recommendedName>
    <alternativeName>
        <fullName>10 kDa antigen</fullName>
    </alternativeName>
    <alternativeName>
        <fullName evidence="1">10 kDa chaperonin</fullName>
    </alternativeName>
    <alternativeName>
        <fullName evidence="1">Chaperonin-10</fullName>
        <shortName evidence="1">Cpn10</shortName>
    </alternativeName>
</protein>
<gene>
    <name evidence="1" type="primary">groES</name>
    <name type="synonym">chpA</name>
    <name evidence="1" type="synonym">groS</name>
    <name type="synonym">mopB</name>
    <name type="ordered locus">ML0380</name>
    <name type="ORF">B1620_C3_227</name>
    <name type="ORF">B229_C3_247</name>
</gene>
<keyword id="KW-0002">3D-structure</keyword>
<keyword id="KW-0143">Chaperone</keyword>
<keyword id="KW-0963">Cytoplasm</keyword>
<keyword id="KW-0903">Direct protein sequencing</keyword>
<keyword id="KW-1185">Reference proteome</keyword>
<keyword id="KW-0346">Stress response</keyword>
<organism>
    <name type="scientific">Mycobacterium leprae (strain TN)</name>
    <dbReference type="NCBI Taxonomy" id="272631"/>
    <lineage>
        <taxon>Bacteria</taxon>
        <taxon>Bacillati</taxon>
        <taxon>Actinomycetota</taxon>
        <taxon>Actinomycetes</taxon>
        <taxon>Mycobacteriales</taxon>
        <taxon>Mycobacteriaceae</taxon>
        <taxon>Mycobacterium</taxon>
    </lineage>
</organism>
<feature type="initiator methionine" description="Removed" evidence="2">
    <location>
        <position position="1"/>
    </location>
</feature>
<feature type="chain" id="PRO_0000174786" description="Co-chaperonin GroES">
    <location>
        <begin position="2"/>
        <end position="100"/>
    </location>
</feature>
<dbReference type="EMBL" id="X59413">
    <property type="status" value="NOT_ANNOTATED_CDS"/>
    <property type="molecule type" value="Genomic_DNA"/>
</dbReference>
<dbReference type="EMBL" id="Z11665">
    <property type="protein sequence ID" value="CAB63917.1"/>
    <property type="molecule type" value="Genomic_DNA"/>
</dbReference>
<dbReference type="EMBL" id="U00015">
    <property type="protein sequence ID" value="AAC43227.1"/>
    <property type="molecule type" value="Genomic_DNA"/>
</dbReference>
<dbReference type="EMBL" id="U00020">
    <property type="protein sequence ID" value="AAA17311.1"/>
    <property type="molecule type" value="Genomic_DNA"/>
</dbReference>
<dbReference type="EMBL" id="AL583918">
    <property type="protein sequence ID" value="CAC29888.1"/>
    <property type="molecule type" value="Genomic_DNA"/>
</dbReference>
<dbReference type="PIR" id="S25180">
    <property type="entry name" value="S25180"/>
</dbReference>
<dbReference type="PIR" id="S72818">
    <property type="entry name" value="S72818"/>
</dbReference>
<dbReference type="RefSeq" id="NP_301372.1">
    <property type="nucleotide sequence ID" value="NC_002677.1"/>
</dbReference>
<dbReference type="RefSeq" id="WP_010907696.1">
    <property type="nucleotide sequence ID" value="NC_002677.1"/>
</dbReference>
<dbReference type="PDB" id="1LEP">
    <property type="method" value="X-ray"/>
    <property type="resolution" value="3.50 A"/>
    <property type="chains" value="A/B/C/D/E/F/G=2-100"/>
</dbReference>
<dbReference type="PDBsum" id="1LEP"/>
<dbReference type="SMR" id="P24301"/>
<dbReference type="STRING" id="272631.gene:17574199"/>
<dbReference type="KEGG" id="mle:ML0380"/>
<dbReference type="PATRIC" id="fig|272631.5.peg.642"/>
<dbReference type="Leproma" id="ML0380"/>
<dbReference type="eggNOG" id="COG0234">
    <property type="taxonomic scope" value="Bacteria"/>
</dbReference>
<dbReference type="HOGENOM" id="CLU_132825_2_0_11"/>
<dbReference type="OrthoDB" id="9806791at2"/>
<dbReference type="EvolutionaryTrace" id="P24301"/>
<dbReference type="Proteomes" id="UP000000806">
    <property type="component" value="Chromosome"/>
</dbReference>
<dbReference type="GO" id="GO:0005737">
    <property type="term" value="C:cytoplasm"/>
    <property type="evidence" value="ECO:0007669"/>
    <property type="project" value="UniProtKB-SubCell"/>
</dbReference>
<dbReference type="GO" id="GO:0005524">
    <property type="term" value="F:ATP binding"/>
    <property type="evidence" value="ECO:0007669"/>
    <property type="project" value="InterPro"/>
</dbReference>
<dbReference type="GO" id="GO:0046872">
    <property type="term" value="F:metal ion binding"/>
    <property type="evidence" value="ECO:0007669"/>
    <property type="project" value="TreeGrafter"/>
</dbReference>
<dbReference type="GO" id="GO:0044183">
    <property type="term" value="F:protein folding chaperone"/>
    <property type="evidence" value="ECO:0007669"/>
    <property type="project" value="InterPro"/>
</dbReference>
<dbReference type="GO" id="GO:0051087">
    <property type="term" value="F:protein-folding chaperone binding"/>
    <property type="evidence" value="ECO:0007669"/>
    <property type="project" value="TreeGrafter"/>
</dbReference>
<dbReference type="GO" id="GO:0051082">
    <property type="term" value="F:unfolded protein binding"/>
    <property type="evidence" value="ECO:0007669"/>
    <property type="project" value="TreeGrafter"/>
</dbReference>
<dbReference type="GO" id="GO:0051085">
    <property type="term" value="P:chaperone cofactor-dependent protein refolding"/>
    <property type="evidence" value="ECO:0007669"/>
    <property type="project" value="TreeGrafter"/>
</dbReference>
<dbReference type="CDD" id="cd00320">
    <property type="entry name" value="cpn10"/>
    <property type="match status" value="1"/>
</dbReference>
<dbReference type="FunFam" id="2.30.33.40:FF:000001">
    <property type="entry name" value="10 kDa chaperonin"/>
    <property type="match status" value="1"/>
</dbReference>
<dbReference type="Gene3D" id="2.30.33.40">
    <property type="entry name" value="GroES chaperonin"/>
    <property type="match status" value="1"/>
</dbReference>
<dbReference type="HAMAP" id="MF_00580">
    <property type="entry name" value="CH10"/>
    <property type="match status" value="1"/>
</dbReference>
<dbReference type="InterPro" id="IPR020818">
    <property type="entry name" value="Chaperonin_GroES"/>
</dbReference>
<dbReference type="InterPro" id="IPR037124">
    <property type="entry name" value="Chaperonin_GroES_sf"/>
</dbReference>
<dbReference type="InterPro" id="IPR018369">
    <property type="entry name" value="Chaprnonin_Cpn10_CS"/>
</dbReference>
<dbReference type="InterPro" id="IPR011032">
    <property type="entry name" value="GroES-like_sf"/>
</dbReference>
<dbReference type="NCBIfam" id="NF001530">
    <property type="entry name" value="PRK00364.1-6"/>
    <property type="match status" value="1"/>
</dbReference>
<dbReference type="NCBIfam" id="NF001531">
    <property type="entry name" value="PRK00364.2-2"/>
    <property type="match status" value="1"/>
</dbReference>
<dbReference type="NCBIfam" id="NF001533">
    <property type="entry name" value="PRK00364.2-4"/>
    <property type="match status" value="1"/>
</dbReference>
<dbReference type="NCBIfam" id="NF001534">
    <property type="entry name" value="PRK00364.2-5"/>
    <property type="match status" value="1"/>
</dbReference>
<dbReference type="PANTHER" id="PTHR10772">
    <property type="entry name" value="10 KDA HEAT SHOCK PROTEIN"/>
    <property type="match status" value="1"/>
</dbReference>
<dbReference type="PANTHER" id="PTHR10772:SF58">
    <property type="entry name" value="CO-CHAPERONIN GROES"/>
    <property type="match status" value="1"/>
</dbReference>
<dbReference type="Pfam" id="PF00166">
    <property type="entry name" value="Cpn10"/>
    <property type="match status" value="1"/>
</dbReference>
<dbReference type="PRINTS" id="PR00297">
    <property type="entry name" value="CHAPERONIN10"/>
</dbReference>
<dbReference type="SMART" id="SM00883">
    <property type="entry name" value="Cpn10"/>
    <property type="match status" value="1"/>
</dbReference>
<dbReference type="SUPFAM" id="SSF50129">
    <property type="entry name" value="GroES-like"/>
    <property type="match status" value="1"/>
</dbReference>
<dbReference type="PROSITE" id="PS00681">
    <property type="entry name" value="CHAPERONINS_CPN10"/>
    <property type="match status" value="1"/>
</dbReference>
<proteinExistence type="evidence at protein level"/>
<accession>P24301</accession>
<comment type="function">
    <text evidence="1">Together with the chaperonin GroEL, plays an essential role in assisting protein folding. The GroEL-GroES system forms a nano-cage that allows encapsulation of the non-native substrate proteins and provides a physical environment optimized to promote and accelerate protein folding. GroES binds to the apical surface of the GroEL ring, thereby capping the opening of the GroEL channel.</text>
</comment>
<comment type="subunit">
    <text evidence="1">Heptamer of 7 subunits arranged in a ring. Interacts with the chaperonin GroEL.</text>
</comment>
<comment type="subcellular location">
    <subcellularLocation>
        <location evidence="1">Cytoplasm</location>
    </subcellularLocation>
</comment>
<comment type="similarity">
    <text evidence="1 3">Belongs to the GroES chaperonin family.</text>
</comment>
<name>CH10_MYCLE</name>